<protein>
    <recommendedName>
        <fullName evidence="1">Co-chaperonin GroES</fullName>
    </recommendedName>
    <alternativeName>
        <fullName evidence="1">10 kDa chaperonin</fullName>
    </alternativeName>
    <alternativeName>
        <fullName evidence="1">Chaperonin-10</fullName>
        <shortName evidence="1">Cpn10</shortName>
    </alternativeName>
</protein>
<reference key="1">
    <citation type="journal article" date="2010" name="J. Bacteriol.">
        <title>Genome sequence of the dioxin-mineralizing bacterium Sphingomonas wittichii RW1.</title>
        <authorList>
            <person name="Miller T.R."/>
            <person name="Delcher A.L."/>
            <person name="Salzberg S.L."/>
            <person name="Saunders E."/>
            <person name="Detter J.C."/>
            <person name="Halden R.U."/>
        </authorList>
    </citation>
    <scope>NUCLEOTIDE SEQUENCE [LARGE SCALE GENOMIC DNA]</scope>
    <source>
        <strain>DSM 6014 / CCUG 31198 / JCM 15750 / NBRC 105917 / EY 4224 / RW1</strain>
    </source>
</reference>
<comment type="function">
    <text evidence="1">Together with the chaperonin GroEL, plays an essential role in assisting protein folding. The GroEL-GroES system forms a nano-cage that allows encapsulation of the non-native substrate proteins and provides a physical environment optimized to promote and accelerate protein folding. GroES binds to the apical surface of the GroEL ring, thereby capping the opening of the GroEL channel.</text>
</comment>
<comment type="subunit">
    <text evidence="1">Heptamer of 7 subunits arranged in a ring. Interacts with the chaperonin GroEL.</text>
</comment>
<comment type="subcellular location">
    <subcellularLocation>
        <location evidence="1">Cytoplasm</location>
    </subcellularLocation>
</comment>
<comment type="similarity">
    <text evidence="1">Belongs to the GroES chaperonin family.</text>
</comment>
<organism>
    <name type="scientific">Rhizorhabdus wittichii (strain DSM 6014 / CCUG 31198 / JCM 15750 / NBRC 105917 / EY 4224 / RW1)</name>
    <name type="common">Sphingomonas wittichii</name>
    <dbReference type="NCBI Taxonomy" id="392499"/>
    <lineage>
        <taxon>Bacteria</taxon>
        <taxon>Pseudomonadati</taxon>
        <taxon>Pseudomonadota</taxon>
        <taxon>Alphaproteobacteria</taxon>
        <taxon>Sphingomonadales</taxon>
        <taxon>Sphingomonadaceae</taxon>
        <taxon>Rhizorhabdus</taxon>
    </lineage>
</organism>
<accession>A5VBQ5</accession>
<gene>
    <name evidence="1" type="primary">groES</name>
    <name evidence="1" type="synonym">groS</name>
    <name type="ordered locus">Swit_3375</name>
</gene>
<keyword id="KW-0143">Chaperone</keyword>
<keyword id="KW-0963">Cytoplasm</keyword>
<keyword id="KW-1185">Reference proteome</keyword>
<evidence type="ECO:0000255" key="1">
    <source>
        <dbReference type="HAMAP-Rule" id="MF_00580"/>
    </source>
</evidence>
<dbReference type="EMBL" id="CP000699">
    <property type="protein sequence ID" value="ABQ69721.1"/>
    <property type="molecule type" value="Genomic_DNA"/>
</dbReference>
<dbReference type="SMR" id="A5VBQ5"/>
<dbReference type="STRING" id="392499.Swit_3375"/>
<dbReference type="PaxDb" id="392499-Swit_3375"/>
<dbReference type="KEGG" id="swi:Swit_3375"/>
<dbReference type="eggNOG" id="COG0234">
    <property type="taxonomic scope" value="Bacteria"/>
</dbReference>
<dbReference type="HOGENOM" id="CLU_132825_1_0_5"/>
<dbReference type="OrthoDB" id="9806791at2"/>
<dbReference type="Proteomes" id="UP000001989">
    <property type="component" value="Chromosome"/>
</dbReference>
<dbReference type="GO" id="GO:0005737">
    <property type="term" value="C:cytoplasm"/>
    <property type="evidence" value="ECO:0007669"/>
    <property type="project" value="UniProtKB-SubCell"/>
</dbReference>
<dbReference type="GO" id="GO:0005524">
    <property type="term" value="F:ATP binding"/>
    <property type="evidence" value="ECO:0007669"/>
    <property type="project" value="InterPro"/>
</dbReference>
<dbReference type="GO" id="GO:0046872">
    <property type="term" value="F:metal ion binding"/>
    <property type="evidence" value="ECO:0007669"/>
    <property type="project" value="TreeGrafter"/>
</dbReference>
<dbReference type="GO" id="GO:0044183">
    <property type="term" value="F:protein folding chaperone"/>
    <property type="evidence" value="ECO:0007669"/>
    <property type="project" value="InterPro"/>
</dbReference>
<dbReference type="GO" id="GO:0051087">
    <property type="term" value="F:protein-folding chaperone binding"/>
    <property type="evidence" value="ECO:0007669"/>
    <property type="project" value="TreeGrafter"/>
</dbReference>
<dbReference type="GO" id="GO:0051082">
    <property type="term" value="F:unfolded protein binding"/>
    <property type="evidence" value="ECO:0007669"/>
    <property type="project" value="TreeGrafter"/>
</dbReference>
<dbReference type="GO" id="GO:0051085">
    <property type="term" value="P:chaperone cofactor-dependent protein refolding"/>
    <property type="evidence" value="ECO:0007669"/>
    <property type="project" value="TreeGrafter"/>
</dbReference>
<dbReference type="CDD" id="cd00320">
    <property type="entry name" value="cpn10"/>
    <property type="match status" value="1"/>
</dbReference>
<dbReference type="FunFam" id="2.30.33.40:FF:000001">
    <property type="entry name" value="10 kDa chaperonin"/>
    <property type="match status" value="1"/>
</dbReference>
<dbReference type="Gene3D" id="2.30.33.40">
    <property type="entry name" value="GroES chaperonin"/>
    <property type="match status" value="1"/>
</dbReference>
<dbReference type="HAMAP" id="MF_00580">
    <property type="entry name" value="CH10"/>
    <property type="match status" value="1"/>
</dbReference>
<dbReference type="InterPro" id="IPR020818">
    <property type="entry name" value="Chaperonin_GroES"/>
</dbReference>
<dbReference type="InterPro" id="IPR037124">
    <property type="entry name" value="Chaperonin_GroES_sf"/>
</dbReference>
<dbReference type="InterPro" id="IPR018369">
    <property type="entry name" value="Chaprnonin_Cpn10_CS"/>
</dbReference>
<dbReference type="InterPro" id="IPR011032">
    <property type="entry name" value="GroES-like_sf"/>
</dbReference>
<dbReference type="NCBIfam" id="NF001527">
    <property type="entry name" value="PRK00364.1-2"/>
    <property type="match status" value="1"/>
</dbReference>
<dbReference type="NCBIfam" id="NF001529">
    <property type="entry name" value="PRK00364.1-5"/>
    <property type="match status" value="1"/>
</dbReference>
<dbReference type="NCBIfam" id="NF001531">
    <property type="entry name" value="PRK00364.2-2"/>
    <property type="match status" value="1"/>
</dbReference>
<dbReference type="NCBIfam" id="NF001533">
    <property type="entry name" value="PRK00364.2-4"/>
    <property type="match status" value="1"/>
</dbReference>
<dbReference type="NCBIfam" id="NF001534">
    <property type="entry name" value="PRK00364.2-5"/>
    <property type="match status" value="1"/>
</dbReference>
<dbReference type="PANTHER" id="PTHR10772">
    <property type="entry name" value="10 KDA HEAT SHOCK PROTEIN"/>
    <property type="match status" value="1"/>
</dbReference>
<dbReference type="PANTHER" id="PTHR10772:SF58">
    <property type="entry name" value="CO-CHAPERONIN GROES"/>
    <property type="match status" value="1"/>
</dbReference>
<dbReference type="Pfam" id="PF00166">
    <property type="entry name" value="Cpn10"/>
    <property type="match status" value="1"/>
</dbReference>
<dbReference type="PRINTS" id="PR00297">
    <property type="entry name" value="CHAPERONIN10"/>
</dbReference>
<dbReference type="SMART" id="SM00883">
    <property type="entry name" value="Cpn10"/>
    <property type="match status" value="1"/>
</dbReference>
<dbReference type="SUPFAM" id="SSF50129">
    <property type="entry name" value="GroES-like"/>
    <property type="match status" value="1"/>
</dbReference>
<dbReference type="PROSITE" id="PS00681">
    <property type="entry name" value="CHAPERONINS_CPN10"/>
    <property type="match status" value="1"/>
</dbReference>
<sequence>MSFRPLHDRVLVRRVEAEEKTAGGIIIPDSAKEKPQEGEVVAVGGGSKAEDGKVTPLDVKAGDKILFGKWSGTEVKINGEDLLIMKESDILGIVG</sequence>
<name>CH10_RHIWR</name>
<feature type="chain" id="PRO_1000082395" description="Co-chaperonin GroES">
    <location>
        <begin position="1"/>
        <end position="95"/>
    </location>
</feature>
<proteinExistence type="inferred from homology"/>